<comment type="similarity">
    <text evidence="1">Belongs to the CinA family.</text>
</comment>
<evidence type="ECO:0000255" key="1">
    <source>
        <dbReference type="HAMAP-Rule" id="MF_00226"/>
    </source>
</evidence>
<accession>A1RPS2</accession>
<proteinExistence type="inferred from homology"/>
<name>CINAL_SHESW</name>
<gene>
    <name type="ordered locus">Sputw3181_3863</name>
</gene>
<organism>
    <name type="scientific">Shewanella sp. (strain W3-18-1)</name>
    <dbReference type="NCBI Taxonomy" id="351745"/>
    <lineage>
        <taxon>Bacteria</taxon>
        <taxon>Pseudomonadati</taxon>
        <taxon>Pseudomonadota</taxon>
        <taxon>Gammaproteobacteria</taxon>
        <taxon>Alteromonadales</taxon>
        <taxon>Shewanellaceae</taxon>
        <taxon>Shewanella</taxon>
    </lineage>
</organism>
<sequence>MKLEMICTGEEVLSGQIVDTNAAWFASTMMEHGIEIQRRVTVGDRLEDLIAVFQERSLHADVILVNGGLGPTSDDMSAEAMAKAKGESLVENIEWRQQLEDWFTRNNREMPVSNLKQAMLPESAVMVDNPVGTACGFRVKLNRAWLFFTPGVPFELKHMVKEQFIPFIRDEFNLDAKVALKKLLTIGQGESALADKIEPLELPEGITIGYRSSMPHIEIKIFARGEKAIVLLPRVTGHVKMVLGTAVVAEDKATLAEEIHSRLLNSGLTLSVAESCTGGMITSQLVDFAGSSSYLHHGLVTYSNESKVRVLGVNPATLDDHGAVSIPTVEEMAKGARAILDSDFALATSGIAGPDGGTEDKPVGTVAIALATRNGVYSQMIKLPRRSRDLVRSLSAAVAYDMLRRELLAEAVIVDYQSIGRFSK</sequence>
<feature type="chain" id="PRO_0000336527" description="CinA-like protein">
    <location>
        <begin position="1"/>
        <end position="424"/>
    </location>
</feature>
<protein>
    <recommendedName>
        <fullName evidence="1">CinA-like protein</fullName>
    </recommendedName>
</protein>
<reference key="1">
    <citation type="submission" date="2006-12" db="EMBL/GenBank/DDBJ databases">
        <title>Complete sequence of Shewanella sp. W3-18-1.</title>
        <authorList>
            <consortium name="US DOE Joint Genome Institute"/>
            <person name="Copeland A."/>
            <person name="Lucas S."/>
            <person name="Lapidus A."/>
            <person name="Barry K."/>
            <person name="Detter J.C."/>
            <person name="Glavina del Rio T."/>
            <person name="Hammon N."/>
            <person name="Israni S."/>
            <person name="Dalin E."/>
            <person name="Tice H."/>
            <person name="Pitluck S."/>
            <person name="Chain P."/>
            <person name="Malfatti S."/>
            <person name="Shin M."/>
            <person name="Vergez L."/>
            <person name="Schmutz J."/>
            <person name="Larimer F."/>
            <person name="Land M."/>
            <person name="Hauser L."/>
            <person name="Kyrpides N."/>
            <person name="Lykidis A."/>
            <person name="Tiedje J."/>
            <person name="Richardson P."/>
        </authorList>
    </citation>
    <scope>NUCLEOTIDE SEQUENCE [LARGE SCALE GENOMIC DNA]</scope>
    <source>
        <strain>W3-18-1</strain>
    </source>
</reference>
<dbReference type="EMBL" id="CP000503">
    <property type="protein sequence ID" value="ABM26667.1"/>
    <property type="molecule type" value="Genomic_DNA"/>
</dbReference>
<dbReference type="RefSeq" id="WP_011791090.1">
    <property type="nucleotide sequence ID" value="NC_008750.1"/>
</dbReference>
<dbReference type="SMR" id="A1RPS2"/>
<dbReference type="KEGG" id="shw:Sputw3181_3863"/>
<dbReference type="HOGENOM" id="CLU_030805_9_2_6"/>
<dbReference type="Proteomes" id="UP000002597">
    <property type="component" value="Chromosome"/>
</dbReference>
<dbReference type="CDD" id="cd00885">
    <property type="entry name" value="cinA"/>
    <property type="match status" value="1"/>
</dbReference>
<dbReference type="Gene3D" id="3.90.950.20">
    <property type="entry name" value="CinA-like"/>
    <property type="match status" value="1"/>
</dbReference>
<dbReference type="Gene3D" id="3.40.980.10">
    <property type="entry name" value="MoaB/Mog-like domain"/>
    <property type="match status" value="1"/>
</dbReference>
<dbReference type="HAMAP" id="MF_00226_B">
    <property type="entry name" value="CinA_B"/>
    <property type="match status" value="1"/>
</dbReference>
<dbReference type="InterPro" id="IPR050101">
    <property type="entry name" value="CinA"/>
</dbReference>
<dbReference type="InterPro" id="IPR036653">
    <property type="entry name" value="CinA-like_C"/>
</dbReference>
<dbReference type="InterPro" id="IPR008136">
    <property type="entry name" value="CinA_C"/>
</dbReference>
<dbReference type="InterPro" id="IPR008135">
    <property type="entry name" value="Competence-induced_CinA"/>
</dbReference>
<dbReference type="InterPro" id="IPR036425">
    <property type="entry name" value="MoaB/Mog-like_dom_sf"/>
</dbReference>
<dbReference type="InterPro" id="IPR001453">
    <property type="entry name" value="MoaB/Mog_dom"/>
</dbReference>
<dbReference type="NCBIfam" id="TIGR00200">
    <property type="entry name" value="cinA_nterm"/>
    <property type="match status" value="1"/>
</dbReference>
<dbReference type="NCBIfam" id="TIGR00177">
    <property type="entry name" value="molyb_syn"/>
    <property type="match status" value="1"/>
</dbReference>
<dbReference type="NCBIfam" id="TIGR00199">
    <property type="entry name" value="PncC_domain"/>
    <property type="match status" value="1"/>
</dbReference>
<dbReference type="PANTHER" id="PTHR13939">
    <property type="entry name" value="NICOTINAMIDE-NUCLEOTIDE AMIDOHYDROLASE PNCC"/>
    <property type="match status" value="1"/>
</dbReference>
<dbReference type="PANTHER" id="PTHR13939:SF0">
    <property type="entry name" value="NMN AMIDOHYDROLASE-LIKE PROTEIN YFAY"/>
    <property type="match status" value="1"/>
</dbReference>
<dbReference type="Pfam" id="PF02464">
    <property type="entry name" value="CinA"/>
    <property type="match status" value="1"/>
</dbReference>
<dbReference type="Pfam" id="PF00994">
    <property type="entry name" value="MoCF_biosynth"/>
    <property type="match status" value="1"/>
</dbReference>
<dbReference type="PIRSF" id="PIRSF006728">
    <property type="entry name" value="CinA"/>
    <property type="match status" value="1"/>
</dbReference>
<dbReference type="SMART" id="SM00852">
    <property type="entry name" value="MoCF_biosynth"/>
    <property type="match status" value="1"/>
</dbReference>
<dbReference type="SUPFAM" id="SSF142433">
    <property type="entry name" value="CinA-like"/>
    <property type="match status" value="1"/>
</dbReference>
<dbReference type="SUPFAM" id="SSF53218">
    <property type="entry name" value="Molybdenum cofactor biosynthesis proteins"/>
    <property type="match status" value="1"/>
</dbReference>